<comment type="catalytic activity">
    <reaction evidence="1">
        <text>(2R)-3-phosphoglycerate + ATP = (2R)-3-phospho-glyceroyl phosphate + ADP</text>
        <dbReference type="Rhea" id="RHEA:14801"/>
        <dbReference type="ChEBI" id="CHEBI:30616"/>
        <dbReference type="ChEBI" id="CHEBI:57604"/>
        <dbReference type="ChEBI" id="CHEBI:58272"/>
        <dbReference type="ChEBI" id="CHEBI:456216"/>
        <dbReference type="EC" id="2.7.2.3"/>
    </reaction>
</comment>
<comment type="pathway">
    <text evidence="1">Carbohydrate degradation; glycolysis; pyruvate from D-glyceraldehyde 3-phosphate: step 2/5.</text>
</comment>
<comment type="subunit">
    <text evidence="1">Monomer.</text>
</comment>
<comment type="subcellular location">
    <subcellularLocation>
        <location evidence="1">Cytoplasm</location>
    </subcellularLocation>
</comment>
<comment type="similarity">
    <text evidence="1">Belongs to the phosphoglycerate kinase family.</text>
</comment>
<gene>
    <name evidence="1" type="primary">pgk</name>
    <name type="ordered locus">mma_2847</name>
</gene>
<reference key="1">
    <citation type="journal article" date="2007" name="PLoS Genet.">
        <title>Genome analysis of Minibacterium massiliensis highlights the convergent evolution of water-living bacteria.</title>
        <authorList>
            <person name="Audic S."/>
            <person name="Robert C."/>
            <person name="Campagna B."/>
            <person name="Parinello H."/>
            <person name="Claverie J.-M."/>
            <person name="Raoult D."/>
            <person name="Drancourt M."/>
        </authorList>
    </citation>
    <scope>NUCLEOTIDE SEQUENCE [LARGE SCALE GENOMIC DNA]</scope>
    <source>
        <strain>Marseille</strain>
    </source>
</reference>
<keyword id="KW-0067">ATP-binding</keyword>
<keyword id="KW-0963">Cytoplasm</keyword>
<keyword id="KW-0324">Glycolysis</keyword>
<keyword id="KW-0418">Kinase</keyword>
<keyword id="KW-0547">Nucleotide-binding</keyword>
<keyword id="KW-0808">Transferase</keyword>
<organism>
    <name type="scientific">Janthinobacterium sp. (strain Marseille)</name>
    <name type="common">Minibacterium massiliensis</name>
    <dbReference type="NCBI Taxonomy" id="375286"/>
    <lineage>
        <taxon>Bacteria</taxon>
        <taxon>Pseudomonadati</taxon>
        <taxon>Pseudomonadota</taxon>
        <taxon>Betaproteobacteria</taxon>
        <taxon>Burkholderiales</taxon>
        <taxon>Oxalobacteraceae</taxon>
        <taxon>Janthinobacterium</taxon>
    </lineage>
</organism>
<feature type="chain" id="PRO_1000009616" description="Phosphoglycerate kinase">
    <location>
        <begin position="1"/>
        <end position="397"/>
    </location>
</feature>
<feature type="binding site" evidence="1">
    <location>
        <begin position="25"/>
        <end position="27"/>
    </location>
    <ligand>
        <name>substrate</name>
    </ligand>
</feature>
<feature type="binding site" evidence="1">
    <location>
        <position position="41"/>
    </location>
    <ligand>
        <name>substrate</name>
    </ligand>
</feature>
<feature type="binding site" evidence="1">
    <location>
        <begin position="64"/>
        <end position="67"/>
    </location>
    <ligand>
        <name>substrate</name>
    </ligand>
</feature>
<feature type="binding site" evidence="1">
    <location>
        <position position="118"/>
    </location>
    <ligand>
        <name>substrate</name>
    </ligand>
</feature>
<feature type="binding site" evidence="1">
    <location>
        <position position="151"/>
    </location>
    <ligand>
        <name>substrate</name>
    </ligand>
</feature>
<feature type="binding site" evidence="1">
    <location>
        <position position="202"/>
    </location>
    <ligand>
        <name>ATP</name>
        <dbReference type="ChEBI" id="CHEBI:30616"/>
    </ligand>
</feature>
<feature type="binding site" evidence="1">
    <location>
        <position position="324"/>
    </location>
    <ligand>
        <name>ATP</name>
        <dbReference type="ChEBI" id="CHEBI:30616"/>
    </ligand>
</feature>
<feature type="binding site" evidence="1">
    <location>
        <begin position="350"/>
        <end position="353"/>
    </location>
    <ligand>
        <name>ATP</name>
        <dbReference type="ChEBI" id="CHEBI:30616"/>
    </ligand>
</feature>
<accession>A6T1Z0</accession>
<dbReference type="EC" id="2.7.2.3" evidence="1"/>
<dbReference type="EMBL" id="CP000269">
    <property type="protein sequence ID" value="ABR88860.1"/>
    <property type="molecule type" value="Genomic_DNA"/>
</dbReference>
<dbReference type="RefSeq" id="WP_012080696.1">
    <property type="nucleotide sequence ID" value="NC_009659.1"/>
</dbReference>
<dbReference type="SMR" id="A6T1Z0"/>
<dbReference type="STRING" id="375286.mma_2847"/>
<dbReference type="KEGG" id="mms:mma_2847"/>
<dbReference type="eggNOG" id="COG0126">
    <property type="taxonomic scope" value="Bacteria"/>
</dbReference>
<dbReference type="HOGENOM" id="CLU_025427_0_2_4"/>
<dbReference type="OrthoDB" id="9808460at2"/>
<dbReference type="UniPathway" id="UPA00109">
    <property type="reaction ID" value="UER00185"/>
</dbReference>
<dbReference type="Proteomes" id="UP000006388">
    <property type="component" value="Chromosome"/>
</dbReference>
<dbReference type="GO" id="GO:0005829">
    <property type="term" value="C:cytosol"/>
    <property type="evidence" value="ECO:0007669"/>
    <property type="project" value="TreeGrafter"/>
</dbReference>
<dbReference type="GO" id="GO:0043531">
    <property type="term" value="F:ADP binding"/>
    <property type="evidence" value="ECO:0007669"/>
    <property type="project" value="TreeGrafter"/>
</dbReference>
<dbReference type="GO" id="GO:0005524">
    <property type="term" value="F:ATP binding"/>
    <property type="evidence" value="ECO:0007669"/>
    <property type="project" value="UniProtKB-KW"/>
</dbReference>
<dbReference type="GO" id="GO:0004618">
    <property type="term" value="F:phosphoglycerate kinase activity"/>
    <property type="evidence" value="ECO:0007669"/>
    <property type="project" value="UniProtKB-UniRule"/>
</dbReference>
<dbReference type="GO" id="GO:0006094">
    <property type="term" value="P:gluconeogenesis"/>
    <property type="evidence" value="ECO:0007669"/>
    <property type="project" value="TreeGrafter"/>
</dbReference>
<dbReference type="GO" id="GO:0006096">
    <property type="term" value="P:glycolytic process"/>
    <property type="evidence" value="ECO:0007669"/>
    <property type="project" value="UniProtKB-UniRule"/>
</dbReference>
<dbReference type="FunFam" id="3.40.50.1260:FF:000001">
    <property type="entry name" value="Phosphoglycerate kinase"/>
    <property type="match status" value="1"/>
</dbReference>
<dbReference type="FunFam" id="3.40.50.1260:FF:000002">
    <property type="entry name" value="Phosphoglycerate kinase"/>
    <property type="match status" value="1"/>
</dbReference>
<dbReference type="Gene3D" id="3.40.50.1260">
    <property type="entry name" value="Phosphoglycerate kinase, N-terminal domain"/>
    <property type="match status" value="2"/>
</dbReference>
<dbReference type="HAMAP" id="MF_00145">
    <property type="entry name" value="Phosphoglyc_kinase"/>
    <property type="match status" value="1"/>
</dbReference>
<dbReference type="InterPro" id="IPR001576">
    <property type="entry name" value="Phosphoglycerate_kinase"/>
</dbReference>
<dbReference type="InterPro" id="IPR015911">
    <property type="entry name" value="Phosphoglycerate_kinase_CS"/>
</dbReference>
<dbReference type="InterPro" id="IPR015824">
    <property type="entry name" value="Phosphoglycerate_kinase_N"/>
</dbReference>
<dbReference type="InterPro" id="IPR036043">
    <property type="entry name" value="Phosphoglycerate_kinase_sf"/>
</dbReference>
<dbReference type="PANTHER" id="PTHR11406">
    <property type="entry name" value="PHOSPHOGLYCERATE KINASE"/>
    <property type="match status" value="1"/>
</dbReference>
<dbReference type="PANTHER" id="PTHR11406:SF23">
    <property type="entry name" value="PHOSPHOGLYCERATE KINASE 1, CHLOROPLASTIC-RELATED"/>
    <property type="match status" value="1"/>
</dbReference>
<dbReference type="Pfam" id="PF00162">
    <property type="entry name" value="PGK"/>
    <property type="match status" value="1"/>
</dbReference>
<dbReference type="PIRSF" id="PIRSF000724">
    <property type="entry name" value="Pgk"/>
    <property type="match status" value="1"/>
</dbReference>
<dbReference type="PRINTS" id="PR00477">
    <property type="entry name" value="PHGLYCKINASE"/>
</dbReference>
<dbReference type="SUPFAM" id="SSF53748">
    <property type="entry name" value="Phosphoglycerate kinase"/>
    <property type="match status" value="1"/>
</dbReference>
<dbReference type="PROSITE" id="PS00111">
    <property type="entry name" value="PGLYCERATE_KINASE"/>
    <property type="match status" value="1"/>
</dbReference>
<name>PGK_JANMA</name>
<sequence length="397" mass="41235">MQFKRLSDLIARGELQGKRVFIRADLNVPQDSTGNITEDTRIRASVPAIQQALQAGAAVMVTSHLGRPVEGEFKPADTLAPIAQRLSELLGQPVALKQNWVDGVDVAPGQVVLLENCRVNKGEKKNDDALAQKIAALCDVYVNDAFGTAHRAEATTHGIAKYAPVACAGPLLAAELDALGKALGEPASPLVAIVAGSKVSTKLTILKTLADKVDNLIVGGGIANTFMLAAGLKIGKSLAEADLLGDAKAIIDMMAKRGASVPIPVDVVCAKEFAPTAAATVKDVADVADDDMILDIGPKTAELLARQIAQAGTIVWNGPVGVFEFDQFANGTKTLAYAIAESKGFSVAGGGDTLAAIAKYDIGDKIDYISTGGGAFLEFLEGKTLPAVAILEERAQG</sequence>
<evidence type="ECO:0000255" key="1">
    <source>
        <dbReference type="HAMAP-Rule" id="MF_00145"/>
    </source>
</evidence>
<protein>
    <recommendedName>
        <fullName evidence="1">Phosphoglycerate kinase</fullName>
        <ecNumber evidence="1">2.7.2.3</ecNumber>
    </recommendedName>
</protein>
<proteinExistence type="inferred from homology"/>